<organism>
    <name type="scientific">Vibrio campbellii (strain ATCC BAA-1116)</name>
    <dbReference type="NCBI Taxonomy" id="2902295"/>
    <lineage>
        <taxon>Bacteria</taxon>
        <taxon>Pseudomonadati</taxon>
        <taxon>Pseudomonadota</taxon>
        <taxon>Gammaproteobacteria</taxon>
        <taxon>Vibrionales</taxon>
        <taxon>Vibrionaceae</taxon>
        <taxon>Vibrio</taxon>
    </lineage>
</organism>
<feature type="chain" id="PRO_1000082877" description="ATP-dependent RNA helicase RhlB">
    <location>
        <begin position="1"/>
        <end position="437"/>
    </location>
</feature>
<feature type="domain" description="Helicase ATP-binding" evidence="1">
    <location>
        <begin position="40"/>
        <end position="219"/>
    </location>
</feature>
<feature type="domain" description="Helicase C-terminal" evidence="1">
    <location>
        <begin position="245"/>
        <end position="390"/>
    </location>
</feature>
<feature type="region of interest" description="Disordered" evidence="2">
    <location>
        <begin position="395"/>
        <end position="437"/>
    </location>
</feature>
<feature type="short sequence motif" description="Q motif">
    <location>
        <begin position="9"/>
        <end position="37"/>
    </location>
</feature>
<feature type="short sequence motif" description="DEAD box">
    <location>
        <begin position="165"/>
        <end position="168"/>
    </location>
</feature>
<feature type="compositionally biased region" description="Low complexity" evidence="2">
    <location>
        <begin position="403"/>
        <end position="413"/>
    </location>
</feature>
<feature type="compositionally biased region" description="Basic residues" evidence="2">
    <location>
        <begin position="417"/>
        <end position="428"/>
    </location>
</feature>
<feature type="binding site" evidence="1">
    <location>
        <begin position="53"/>
        <end position="60"/>
    </location>
    <ligand>
        <name>ATP</name>
        <dbReference type="ChEBI" id="CHEBI:30616"/>
    </ligand>
</feature>
<name>RHLB_VIBC1</name>
<dbReference type="EC" id="3.6.4.13" evidence="1"/>
<dbReference type="EMBL" id="CP000789">
    <property type="protein sequence ID" value="ABU69360.1"/>
    <property type="molecule type" value="Genomic_DNA"/>
</dbReference>
<dbReference type="RefSeq" id="WP_012126603.1">
    <property type="nucleotide sequence ID" value="NC_009783.1"/>
</dbReference>
<dbReference type="SMR" id="A7MXT4"/>
<dbReference type="KEGG" id="vha:VIBHAR_00338"/>
<dbReference type="PATRIC" id="fig|338187.25.peg.2241"/>
<dbReference type="Proteomes" id="UP000008152">
    <property type="component" value="Chromosome I"/>
</dbReference>
<dbReference type="GO" id="GO:0005829">
    <property type="term" value="C:cytosol"/>
    <property type="evidence" value="ECO:0007669"/>
    <property type="project" value="TreeGrafter"/>
</dbReference>
<dbReference type="GO" id="GO:0005524">
    <property type="term" value="F:ATP binding"/>
    <property type="evidence" value="ECO:0007669"/>
    <property type="project" value="UniProtKB-UniRule"/>
</dbReference>
<dbReference type="GO" id="GO:0016887">
    <property type="term" value="F:ATP hydrolysis activity"/>
    <property type="evidence" value="ECO:0007669"/>
    <property type="project" value="RHEA"/>
</dbReference>
<dbReference type="GO" id="GO:0003723">
    <property type="term" value="F:RNA binding"/>
    <property type="evidence" value="ECO:0007669"/>
    <property type="project" value="UniProtKB-UniRule"/>
</dbReference>
<dbReference type="GO" id="GO:0003724">
    <property type="term" value="F:RNA helicase activity"/>
    <property type="evidence" value="ECO:0007669"/>
    <property type="project" value="UniProtKB-UniRule"/>
</dbReference>
<dbReference type="GO" id="GO:0006401">
    <property type="term" value="P:RNA catabolic process"/>
    <property type="evidence" value="ECO:0007669"/>
    <property type="project" value="UniProtKB-UniRule"/>
</dbReference>
<dbReference type="CDD" id="cd00268">
    <property type="entry name" value="DEADc"/>
    <property type="match status" value="1"/>
</dbReference>
<dbReference type="CDD" id="cd18787">
    <property type="entry name" value="SF2_C_DEAD"/>
    <property type="match status" value="1"/>
</dbReference>
<dbReference type="FunFam" id="3.40.50.300:FF:000008">
    <property type="entry name" value="ATP-dependent RNA helicase RhlB"/>
    <property type="match status" value="1"/>
</dbReference>
<dbReference type="FunFam" id="3.40.50.300:FF:000312">
    <property type="entry name" value="ATP-dependent RNA helicase RhlB"/>
    <property type="match status" value="1"/>
</dbReference>
<dbReference type="Gene3D" id="3.40.50.300">
    <property type="entry name" value="P-loop containing nucleotide triphosphate hydrolases"/>
    <property type="match status" value="2"/>
</dbReference>
<dbReference type="HAMAP" id="MF_00661">
    <property type="entry name" value="DEAD_helicase_RhlB"/>
    <property type="match status" value="1"/>
</dbReference>
<dbReference type="InterPro" id="IPR011545">
    <property type="entry name" value="DEAD/DEAH_box_helicase_dom"/>
</dbReference>
<dbReference type="InterPro" id="IPR050079">
    <property type="entry name" value="DEAD_box_RNA_helicase"/>
</dbReference>
<dbReference type="InterPro" id="IPR014001">
    <property type="entry name" value="Helicase_ATP-bd"/>
</dbReference>
<dbReference type="InterPro" id="IPR001650">
    <property type="entry name" value="Helicase_C-like"/>
</dbReference>
<dbReference type="InterPro" id="IPR027417">
    <property type="entry name" value="P-loop_NTPase"/>
</dbReference>
<dbReference type="InterPro" id="IPR000629">
    <property type="entry name" value="RNA-helicase_DEAD-box_CS"/>
</dbReference>
<dbReference type="InterPro" id="IPR023554">
    <property type="entry name" value="RNA_helicase_ATP-dep_RhlB"/>
</dbReference>
<dbReference type="InterPro" id="IPR014014">
    <property type="entry name" value="RNA_helicase_DEAD_Q_motif"/>
</dbReference>
<dbReference type="NCBIfam" id="NF003419">
    <property type="entry name" value="PRK04837.1"/>
    <property type="match status" value="1"/>
</dbReference>
<dbReference type="PANTHER" id="PTHR47959:SF10">
    <property type="entry name" value="ATP-DEPENDENT RNA HELICASE RHLB"/>
    <property type="match status" value="1"/>
</dbReference>
<dbReference type="PANTHER" id="PTHR47959">
    <property type="entry name" value="ATP-DEPENDENT RNA HELICASE RHLE-RELATED"/>
    <property type="match status" value="1"/>
</dbReference>
<dbReference type="Pfam" id="PF00270">
    <property type="entry name" value="DEAD"/>
    <property type="match status" value="1"/>
</dbReference>
<dbReference type="Pfam" id="PF00271">
    <property type="entry name" value="Helicase_C"/>
    <property type="match status" value="1"/>
</dbReference>
<dbReference type="SMART" id="SM00487">
    <property type="entry name" value="DEXDc"/>
    <property type="match status" value="1"/>
</dbReference>
<dbReference type="SMART" id="SM00490">
    <property type="entry name" value="HELICc"/>
    <property type="match status" value="1"/>
</dbReference>
<dbReference type="SUPFAM" id="SSF52540">
    <property type="entry name" value="P-loop containing nucleoside triphosphate hydrolases"/>
    <property type="match status" value="1"/>
</dbReference>
<dbReference type="PROSITE" id="PS00039">
    <property type="entry name" value="DEAD_ATP_HELICASE"/>
    <property type="match status" value="1"/>
</dbReference>
<dbReference type="PROSITE" id="PS51192">
    <property type="entry name" value="HELICASE_ATP_BIND_1"/>
    <property type="match status" value="1"/>
</dbReference>
<dbReference type="PROSITE" id="PS51194">
    <property type="entry name" value="HELICASE_CTER"/>
    <property type="match status" value="1"/>
</dbReference>
<dbReference type="PROSITE" id="PS51195">
    <property type="entry name" value="Q_MOTIF"/>
    <property type="match status" value="1"/>
</dbReference>
<sequence length="437" mass="49084">MKKTHITEQKFADLGLKPQVTEGLEKKGFEYCTPIQALALPVLLTGQDIAGQAQTGTGKTLAFLTATFNHLLTTPEHEGRKPTQPRAIIMAPTRELAIQIFNDAAPLIASTGLKAALAYGGESYDKQLAKLQDGVDILIGTTGRIIDFYKQRVFNLNNIQAVVLDEADRMFDLGFIKDIRFLFRRMPEPKERLNMLFSATLSYRVQELAFEHMHNPEHVVVEPEQKTGHRIQEELFYPSNEDKMALLQTLIEEEWPDRAIVFANTKHKCESIWGHLAADGHRVGLLTGDVPQKKREKILEQFTRGEVDLLVATDVAARGLHIPQVTHVFNFDLPDDCEDYVHRIGRTGRAGASGHSISFACEDYAINLPPIEEYIEHAIPVSDYDASALIQDLPAPLRMRAPRTQQRRTNTGGTRSGNRKPQGRRPRQPRQSAPKQS</sequence>
<comment type="function">
    <text evidence="1">DEAD-box RNA helicase involved in RNA degradation. Has RNA-dependent ATPase activity and unwinds double-stranded RNA.</text>
</comment>
<comment type="catalytic activity">
    <reaction evidence="1">
        <text>ATP + H2O = ADP + phosphate + H(+)</text>
        <dbReference type="Rhea" id="RHEA:13065"/>
        <dbReference type="ChEBI" id="CHEBI:15377"/>
        <dbReference type="ChEBI" id="CHEBI:15378"/>
        <dbReference type="ChEBI" id="CHEBI:30616"/>
        <dbReference type="ChEBI" id="CHEBI:43474"/>
        <dbReference type="ChEBI" id="CHEBI:456216"/>
        <dbReference type="EC" id="3.6.4.13"/>
    </reaction>
</comment>
<comment type="subunit">
    <text evidence="1">Component of the RNA degradosome, which is a multiprotein complex involved in RNA processing and mRNA degradation.</text>
</comment>
<comment type="subcellular location">
    <subcellularLocation>
        <location evidence="1">Cytoplasm</location>
    </subcellularLocation>
</comment>
<comment type="similarity">
    <text evidence="1">Belongs to the DEAD box helicase family. RhlB subfamily.</text>
</comment>
<accession>A7MXT4</accession>
<proteinExistence type="inferred from homology"/>
<keyword id="KW-0067">ATP-binding</keyword>
<keyword id="KW-0963">Cytoplasm</keyword>
<keyword id="KW-0347">Helicase</keyword>
<keyword id="KW-0378">Hydrolase</keyword>
<keyword id="KW-0547">Nucleotide-binding</keyword>
<keyword id="KW-0694">RNA-binding</keyword>
<evidence type="ECO:0000255" key="1">
    <source>
        <dbReference type="HAMAP-Rule" id="MF_00661"/>
    </source>
</evidence>
<evidence type="ECO:0000256" key="2">
    <source>
        <dbReference type="SAM" id="MobiDB-lite"/>
    </source>
</evidence>
<reference key="1">
    <citation type="submission" date="2007-08" db="EMBL/GenBank/DDBJ databases">
        <authorList>
            <consortium name="The Vibrio harveyi Genome Sequencing Project"/>
            <person name="Bassler B."/>
            <person name="Clifton S.W."/>
            <person name="Fulton L."/>
            <person name="Delehaunty K."/>
            <person name="Fronick C."/>
            <person name="Harrison M."/>
            <person name="Markivic C."/>
            <person name="Fulton R."/>
            <person name="Tin-Wollam A.-M."/>
            <person name="Shah N."/>
            <person name="Pepin K."/>
            <person name="Nash W."/>
            <person name="Thiruvilangam P."/>
            <person name="Bhonagiri V."/>
            <person name="Waters C."/>
            <person name="Tu K.C."/>
            <person name="Irgon J."/>
            <person name="Wilson R.K."/>
        </authorList>
    </citation>
    <scope>NUCLEOTIDE SEQUENCE [LARGE SCALE GENOMIC DNA]</scope>
    <source>
        <strain>ATCC BAA-1116 / BB120</strain>
    </source>
</reference>
<gene>
    <name evidence="1" type="primary">rhlB</name>
    <name type="ordered locus">VIBHAR_00338</name>
</gene>
<protein>
    <recommendedName>
        <fullName evidence="1">ATP-dependent RNA helicase RhlB</fullName>
        <ecNumber evidence="1">3.6.4.13</ecNumber>
    </recommendedName>
</protein>